<evidence type="ECO:0000305" key="1"/>
<organism>
    <name type="scientific">Salmonella typhi</name>
    <dbReference type="NCBI Taxonomy" id="90370"/>
    <lineage>
        <taxon>Bacteria</taxon>
        <taxon>Pseudomonadati</taxon>
        <taxon>Pseudomonadota</taxon>
        <taxon>Gammaproteobacteria</taxon>
        <taxon>Enterobacterales</taxon>
        <taxon>Enterobacteriaceae</taxon>
        <taxon>Salmonella</taxon>
    </lineage>
</organism>
<feature type="chain" id="PRO_0000065835" description="Vi polysaccharide biosynthesis protein VipC/TviE">
    <location>
        <begin position="1"/>
        <end position="578"/>
    </location>
</feature>
<feature type="sequence conflict" description="In Ref. 1 and 4." evidence="1" ref="1 4">
    <original>S</original>
    <variation>G</variation>
    <location>
        <position position="290"/>
    </location>
</feature>
<feature type="sequence conflict" description="In Ref. 1; CAA47994." evidence="1" ref="1">
    <original>KH</original>
    <variation>ND</variation>
    <location>
        <begin position="362"/>
        <end position="363"/>
    </location>
</feature>
<accession>Q04975</accession>
<gene>
    <name type="primary">vipC</name>
    <name type="synonym">tviE</name>
    <name type="ordered locus">STY4656</name>
    <name type="ordered locus">t4349</name>
</gene>
<sequence>MITQEEKLAALGKTCLTLKQEKKLAQAVALIDSELPTEALTSLAMLKKAEFLHDVNETERAYALYETLIAQNNDEARYEYARRLYNTGLAKDAQLILKKVSNGVQKKYNNYLGKINKICDLLERLEGKAIPVGTNTCIIAMKHAILFYRNRQPRQLPVGSFGRLALCTGSLGSGGAERQISRLAIEIARKYRQKGKIGGLKVEEPVELIIRSLTPELRQDFFLKEVLEEQVEVLEIAKITGNLFDDATIESPELRLLLSHLPPVCKYGIKHLVPHLCERKLDYLSVWQDSACLMIALAALIAGVPRIQLGLRGLPPVVRKRLFKPEYEPLYQALAVVPGVDFMSNNHCVTRHYADWLKLEAKHFQVVYNGVLPPSTEPSSEVPHKIWQQFTQKTQDADTTIGGVFRFVGDKNPFAWIDFAARYLQHHPATRFVLVGDGDLRAEAQKRAEQLGILERILFVGASRDVGYWLQKMNVFILFSRYEGLPNVLIEAQMVGVPVISTPAGGSAECFIEGVSGFILDDAQTVNLDQACRYAEKLVNLWRSRTGICQQTQSFLQERFTVEHMVGTFVKTIASQPR</sequence>
<protein>
    <recommendedName>
        <fullName>Vi polysaccharide biosynthesis protein VipC/TviE</fullName>
    </recommendedName>
</protein>
<proteinExistence type="predicted"/>
<reference key="1">
    <citation type="journal article" date="1993" name="Res. Microbiol.">
        <title>Identification of six open reading frames in the Salmonella enterica subsp. enterica ser. Typhi viaB locus involved in Vi antigen production.</title>
        <authorList>
            <person name="Waxin H."/>
            <person name="Virlogeux I."/>
            <person name="Kolyva S."/>
            <person name="Popoff M.Y."/>
        </authorList>
    </citation>
    <scope>NUCLEOTIDE SEQUENCE [GENOMIC DNA]</scope>
    <source>
        <strain>ATCC 700931 / Ty2</strain>
    </source>
</reference>
<reference key="2">
    <citation type="journal article" date="1993" name="J. Bacteriol.">
        <title>Complete nucleotide sequence and molecular characterization of ViaB region encoding Vi antigen in Salmonella typhi.</title>
        <authorList>
            <person name="Hashimoto Y."/>
            <person name="Li N."/>
            <person name="Yokoyama H."/>
            <person name="Ezaki T."/>
        </authorList>
    </citation>
    <scope>NUCLEOTIDE SEQUENCE [GENOMIC DNA]</scope>
    <source>
        <strain>GIFU 10007</strain>
    </source>
</reference>
<reference key="3">
    <citation type="journal article" date="2001" name="Nature">
        <title>Complete genome sequence of a multiple drug resistant Salmonella enterica serovar Typhi CT18.</title>
        <authorList>
            <person name="Parkhill J."/>
            <person name="Dougan G."/>
            <person name="James K.D."/>
            <person name="Thomson N.R."/>
            <person name="Pickard D."/>
            <person name="Wain J."/>
            <person name="Churcher C.M."/>
            <person name="Mungall K.L."/>
            <person name="Bentley S.D."/>
            <person name="Holden M.T.G."/>
            <person name="Sebaihia M."/>
            <person name="Baker S."/>
            <person name="Basham D."/>
            <person name="Brooks K."/>
            <person name="Chillingworth T."/>
            <person name="Connerton P."/>
            <person name="Cronin A."/>
            <person name="Davis P."/>
            <person name="Davies R.M."/>
            <person name="Dowd L."/>
            <person name="White N."/>
            <person name="Farrar J."/>
            <person name="Feltwell T."/>
            <person name="Hamlin N."/>
            <person name="Haque A."/>
            <person name="Hien T.T."/>
            <person name="Holroyd S."/>
            <person name="Jagels K."/>
            <person name="Krogh A."/>
            <person name="Larsen T.S."/>
            <person name="Leather S."/>
            <person name="Moule S."/>
            <person name="O'Gaora P."/>
            <person name="Parry C."/>
            <person name="Quail M.A."/>
            <person name="Rutherford K.M."/>
            <person name="Simmonds M."/>
            <person name="Skelton J."/>
            <person name="Stevens K."/>
            <person name="Whitehead S."/>
            <person name="Barrell B.G."/>
        </authorList>
    </citation>
    <scope>NUCLEOTIDE SEQUENCE [LARGE SCALE GENOMIC DNA]</scope>
    <source>
        <strain>CT18</strain>
    </source>
</reference>
<reference key="4">
    <citation type="journal article" date="2003" name="J. Bacteriol.">
        <title>Comparative genomics of Salmonella enterica serovar Typhi strains Ty2 and CT18.</title>
        <authorList>
            <person name="Deng W."/>
            <person name="Liou S.-R."/>
            <person name="Plunkett G. III"/>
            <person name="Mayhew G.F."/>
            <person name="Rose D.J."/>
            <person name="Burland V."/>
            <person name="Kodoyianni V."/>
            <person name="Schwartz D.C."/>
            <person name="Blattner F.R."/>
        </authorList>
    </citation>
    <scope>NUCLEOTIDE SEQUENCE [LARGE SCALE GENOMIC DNA]</scope>
    <source>
        <strain>ATCC 700931 / Ty2</strain>
    </source>
</reference>
<dbReference type="EMBL" id="X67785">
    <property type="protein sequence ID" value="CAA47994.1"/>
    <property type="molecule type" value="Genomic_DNA"/>
</dbReference>
<dbReference type="EMBL" id="D14156">
    <property type="protein sequence ID" value="BAA03195.1"/>
    <property type="molecule type" value="Genomic_DNA"/>
</dbReference>
<dbReference type="EMBL" id="AL513382">
    <property type="protein sequence ID" value="CAD06776.1"/>
    <property type="molecule type" value="Genomic_DNA"/>
</dbReference>
<dbReference type="EMBL" id="AE014613">
    <property type="protein sequence ID" value="AAO71802.1"/>
    <property type="molecule type" value="Genomic_DNA"/>
</dbReference>
<dbReference type="PIR" id="E36892">
    <property type="entry name" value="E36892"/>
</dbReference>
<dbReference type="PIR" id="S28492">
    <property type="entry name" value="S28492"/>
</dbReference>
<dbReference type="RefSeq" id="NP_458735.1">
    <property type="nucleotide sequence ID" value="NC_003198.1"/>
</dbReference>
<dbReference type="RefSeq" id="WP_000632616.1">
    <property type="nucleotide sequence ID" value="NZ_WSUR01000012.1"/>
</dbReference>
<dbReference type="SMR" id="Q04975"/>
<dbReference type="STRING" id="220341.gene:17588473"/>
<dbReference type="CAZy" id="GT4">
    <property type="family name" value="Glycosyltransferase Family 4"/>
</dbReference>
<dbReference type="KEGG" id="stt:t4349"/>
<dbReference type="KEGG" id="sty:STY4656"/>
<dbReference type="PATRIC" id="fig|220341.7.peg.4755"/>
<dbReference type="eggNOG" id="COG0438">
    <property type="taxonomic scope" value="Bacteria"/>
</dbReference>
<dbReference type="HOGENOM" id="CLU_402077_0_0_6"/>
<dbReference type="OMA" id="IAMKHAI"/>
<dbReference type="OrthoDB" id="9777346at2"/>
<dbReference type="UniPathway" id="UPA00811"/>
<dbReference type="UniPathway" id="UPA00934"/>
<dbReference type="Proteomes" id="UP000000541">
    <property type="component" value="Chromosome"/>
</dbReference>
<dbReference type="Proteomes" id="UP000002670">
    <property type="component" value="Chromosome"/>
</dbReference>
<dbReference type="GO" id="GO:0016757">
    <property type="term" value="F:glycosyltransferase activity"/>
    <property type="evidence" value="ECO:0007669"/>
    <property type="project" value="InterPro"/>
</dbReference>
<dbReference type="GO" id="GO:0045227">
    <property type="term" value="P:capsule polysaccharide biosynthetic process"/>
    <property type="evidence" value="ECO:0007669"/>
    <property type="project" value="UniProtKB-UniPathway"/>
</dbReference>
<dbReference type="GO" id="GO:1901135">
    <property type="term" value="P:carbohydrate derivative metabolic process"/>
    <property type="evidence" value="ECO:0007669"/>
    <property type="project" value="UniProtKB-ARBA"/>
</dbReference>
<dbReference type="CDD" id="cd03811">
    <property type="entry name" value="GT4_GT28_WabH-like"/>
    <property type="match status" value="1"/>
</dbReference>
<dbReference type="Gene3D" id="3.40.50.2000">
    <property type="entry name" value="Glycogen Phosphorylase B"/>
    <property type="match status" value="1"/>
</dbReference>
<dbReference type="InterPro" id="IPR001296">
    <property type="entry name" value="Glyco_trans_1"/>
</dbReference>
<dbReference type="NCBIfam" id="NF012034">
    <property type="entry name" value="PRK15490.1"/>
    <property type="match status" value="1"/>
</dbReference>
<dbReference type="PANTHER" id="PTHR12526">
    <property type="entry name" value="GLYCOSYLTRANSFERASE"/>
    <property type="match status" value="1"/>
</dbReference>
<dbReference type="PANTHER" id="PTHR12526:SF630">
    <property type="entry name" value="GLYCOSYLTRANSFERASE"/>
    <property type="match status" value="1"/>
</dbReference>
<dbReference type="Pfam" id="PF00534">
    <property type="entry name" value="Glycos_transf_1"/>
    <property type="match status" value="1"/>
</dbReference>
<dbReference type="SUPFAM" id="SSF53756">
    <property type="entry name" value="UDP-Glycosyltransferase/glycogen phosphorylase"/>
    <property type="match status" value="1"/>
</dbReference>
<name>VIPC_SALTI</name>
<comment type="pathway">
    <text>Glycan metabolism; Vi-antigen biosynthesis.</text>
</comment>
<comment type="pathway">
    <text>Capsule biogenesis; capsule polysaccharide biosynthesis.</text>
</comment>